<accession>A7FPE8</accession>
<reference key="1">
    <citation type="journal article" date="2007" name="PLoS Genet.">
        <title>The complete genome sequence of Yersinia pseudotuberculosis IP31758, the causative agent of Far East scarlet-like fever.</title>
        <authorList>
            <person name="Eppinger M."/>
            <person name="Rosovitz M.J."/>
            <person name="Fricke W.F."/>
            <person name="Rasko D.A."/>
            <person name="Kokorina G."/>
            <person name="Fayolle C."/>
            <person name="Lindler L.E."/>
            <person name="Carniel E."/>
            <person name="Ravel J."/>
        </authorList>
    </citation>
    <scope>NUCLEOTIDE SEQUENCE [LARGE SCALE GENOMIC DNA]</scope>
    <source>
        <strain>IP 31758</strain>
    </source>
</reference>
<evidence type="ECO:0000255" key="1">
    <source>
        <dbReference type="HAMAP-Rule" id="MF_00074"/>
    </source>
</evidence>
<sequence length="206" mass="23097">MLKKLDSLLTVAGITLPDQQKHQLIGYVELLDKWNKAYNLTSVRDPQQMLVRHILDSIVVNPHLQGSRFIDVGTGPGLPGIPLAIVRPDAHFTLLDSLGKRVRFLRQVQHELGLNNIEPVQSRVEAFTSEPPFDGVISRAFASLQDMLSWCHHLPAKPEGRFYALKGVRPDDELAVLPEDIVLESVIKLDVPELDGERHLIILKSN</sequence>
<proteinExistence type="inferred from homology"/>
<comment type="function">
    <text evidence="1">Specifically methylates the N7 position of guanine in position 527 of 16S rRNA.</text>
</comment>
<comment type="catalytic activity">
    <reaction evidence="1">
        <text>guanosine(527) in 16S rRNA + S-adenosyl-L-methionine = N(7)-methylguanosine(527) in 16S rRNA + S-adenosyl-L-homocysteine</text>
        <dbReference type="Rhea" id="RHEA:42732"/>
        <dbReference type="Rhea" id="RHEA-COMP:10209"/>
        <dbReference type="Rhea" id="RHEA-COMP:10210"/>
        <dbReference type="ChEBI" id="CHEBI:57856"/>
        <dbReference type="ChEBI" id="CHEBI:59789"/>
        <dbReference type="ChEBI" id="CHEBI:74269"/>
        <dbReference type="ChEBI" id="CHEBI:74480"/>
        <dbReference type="EC" id="2.1.1.170"/>
    </reaction>
</comment>
<comment type="subcellular location">
    <subcellularLocation>
        <location evidence="1">Cytoplasm</location>
    </subcellularLocation>
</comment>
<comment type="similarity">
    <text evidence="1">Belongs to the methyltransferase superfamily. RNA methyltransferase RsmG family.</text>
</comment>
<protein>
    <recommendedName>
        <fullName evidence="1">Ribosomal RNA small subunit methyltransferase G</fullName>
        <ecNumber evidence="1">2.1.1.170</ecNumber>
    </recommendedName>
    <alternativeName>
        <fullName evidence="1">16S rRNA 7-methylguanosine methyltransferase</fullName>
        <shortName evidence="1">16S rRNA m7G methyltransferase</shortName>
    </alternativeName>
</protein>
<organism>
    <name type="scientific">Yersinia pseudotuberculosis serotype O:1b (strain IP 31758)</name>
    <dbReference type="NCBI Taxonomy" id="349747"/>
    <lineage>
        <taxon>Bacteria</taxon>
        <taxon>Pseudomonadati</taxon>
        <taxon>Pseudomonadota</taxon>
        <taxon>Gammaproteobacteria</taxon>
        <taxon>Enterobacterales</taxon>
        <taxon>Yersiniaceae</taxon>
        <taxon>Yersinia</taxon>
    </lineage>
</organism>
<keyword id="KW-0963">Cytoplasm</keyword>
<keyword id="KW-0489">Methyltransferase</keyword>
<keyword id="KW-0698">rRNA processing</keyword>
<keyword id="KW-0949">S-adenosyl-L-methionine</keyword>
<keyword id="KW-0808">Transferase</keyword>
<feature type="chain" id="PRO_1000057513" description="Ribosomal RNA small subunit methyltransferase G">
    <location>
        <begin position="1"/>
        <end position="206"/>
    </location>
</feature>
<feature type="binding site" evidence="1">
    <location>
        <position position="73"/>
    </location>
    <ligand>
        <name>S-adenosyl-L-methionine</name>
        <dbReference type="ChEBI" id="CHEBI:59789"/>
    </ligand>
</feature>
<feature type="binding site" evidence="1">
    <location>
        <position position="78"/>
    </location>
    <ligand>
        <name>S-adenosyl-L-methionine</name>
        <dbReference type="ChEBI" id="CHEBI:59789"/>
    </ligand>
</feature>
<feature type="binding site" evidence="1">
    <location>
        <begin position="124"/>
        <end position="125"/>
    </location>
    <ligand>
        <name>S-adenosyl-L-methionine</name>
        <dbReference type="ChEBI" id="CHEBI:59789"/>
    </ligand>
</feature>
<feature type="binding site" evidence="1">
    <location>
        <position position="139"/>
    </location>
    <ligand>
        <name>S-adenosyl-L-methionine</name>
        <dbReference type="ChEBI" id="CHEBI:59789"/>
    </ligand>
</feature>
<name>RSMG_YERP3</name>
<gene>
    <name evidence="1" type="primary">rsmG</name>
    <name type="ordered locus">YpsIP31758_4184</name>
</gene>
<dbReference type="EC" id="2.1.1.170" evidence="1"/>
<dbReference type="EMBL" id="CP000720">
    <property type="protein sequence ID" value="ABS46752.1"/>
    <property type="molecule type" value="Genomic_DNA"/>
</dbReference>
<dbReference type="RefSeq" id="WP_002212261.1">
    <property type="nucleotide sequence ID" value="NC_009708.1"/>
</dbReference>
<dbReference type="SMR" id="A7FPE8"/>
<dbReference type="GeneID" id="57974595"/>
<dbReference type="KEGG" id="ypi:YpsIP31758_4184"/>
<dbReference type="HOGENOM" id="CLU_065341_2_2_6"/>
<dbReference type="Proteomes" id="UP000002412">
    <property type="component" value="Chromosome"/>
</dbReference>
<dbReference type="GO" id="GO:0005829">
    <property type="term" value="C:cytosol"/>
    <property type="evidence" value="ECO:0007669"/>
    <property type="project" value="TreeGrafter"/>
</dbReference>
<dbReference type="GO" id="GO:0070043">
    <property type="term" value="F:rRNA (guanine-N7-)-methyltransferase activity"/>
    <property type="evidence" value="ECO:0007669"/>
    <property type="project" value="UniProtKB-UniRule"/>
</dbReference>
<dbReference type="CDD" id="cd02440">
    <property type="entry name" value="AdoMet_MTases"/>
    <property type="match status" value="1"/>
</dbReference>
<dbReference type="FunFam" id="3.40.50.150:FF:000032">
    <property type="entry name" value="Ribosomal RNA small subunit methyltransferase G"/>
    <property type="match status" value="1"/>
</dbReference>
<dbReference type="Gene3D" id="3.40.50.150">
    <property type="entry name" value="Vaccinia Virus protein VP39"/>
    <property type="match status" value="1"/>
</dbReference>
<dbReference type="HAMAP" id="MF_00074">
    <property type="entry name" value="16SrRNA_methyltr_G"/>
    <property type="match status" value="1"/>
</dbReference>
<dbReference type="InterPro" id="IPR003682">
    <property type="entry name" value="rRNA_ssu_MeTfrase_G"/>
</dbReference>
<dbReference type="InterPro" id="IPR029063">
    <property type="entry name" value="SAM-dependent_MTases_sf"/>
</dbReference>
<dbReference type="NCBIfam" id="TIGR00138">
    <property type="entry name" value="rsmG_gidB"/>
    <property type="match status" value="1"/>
</dbReference>
<dbReference type="PANTHER" id="PTHR31760">
    <property type="entry name" value="S-ADENOSYL-L-METHIONINE-DEPENDENT METHYLTRANSFERASES SUPERFAMILY PROTEIN"/>
    <property type="match status" value="1"/>
</dbReference>
<dbReference type="PANTHER" id="PTHR31760:SF0">
    <property type="entry name" value="S-ADENOSYL-L-METHIONINE-DEPENDENT METHYLTRANSFERASES SUPERFAMILY PROTEIN"/>
    <property type="match status" value="1"/>
</dbReference>
<dbReference type="Pfam" id="PF02527">
    <property type="entry name" value="GidB"/>
    <property type="match status" value="1"/>
</dbReference>
<dbReference type="PIRSF" id="PIRSF003078">
    <property type="entry name" value="GidB"/>
    <property type="match status" value="1"/>
</dbReference>
<dbReference type="SUPFAM" id="SSF53335">
    <property type="entry name" value="S-adenosyl-L-methionine-dependent methyltransferases"/>
    <property type="match status" value="1"/>
</dbReference>